<protein>
    <recommendedName>
        <fullName evidence="1">Uridylate kinase</fullName>
        <shortName evidence="1">UK</shortName>
        <ecNumber evidence="1">2.7.4.22</ecNumber>
    </recommendedName>
    <alternativeName>
        <fullName evidence="1">Uridine monophosphate kinase</fullName>
        <shortName evidence="1">UMP kinase</shortName>
        <shortName evidence="1">UMPK</shortName>
    </alternativeName>
</protein>
<accession>Q2L160</accession>
<keyword id="KW-0067">ATP-binding</keyword>
<keyword id="KW-0963">Cytoplasm</keyword>
<keyword id="KW-0418">Kinase</keyword>
<keyword id="KW-0547">Nucleotide-binding</keyword>
<keyword id="KW-0665">Pyrimidine biosynthesis</keyword>
<keyword id="KW-1185">Reference proteome</keyword>
<keyword id="KW-0808">Transferase</keyword>
<evidence type="ECO:0000255" key="1">
    <source>
        <dbReference type="HAMAP-Rule" id="MF_01220"/>
    </source>
</evidence>
<evidence type="ECO:0000305" key="2"/>
<feature type="chain" id="PRO_0000323797" description="Uridylate kinase">
    <location>
        <begin position="1"/>
        <end position="238"/>
    </location>
</feature>
<feature type="binding site" evidence="1">
    <location>
        <begin position="12"/>
        <end position="15"/>
    </location>
    <ligand>
        <name>ATP</name>
        <dbReference type="ChEBI" id="CHEBI:30616"/>
    </ligand>
</feature>
<feature type="binding site" evidence="1">
    <location>
        <position position="54"/>
    </location>
    <ligand>
        <name>UMP</name>
        <dbReference type="ChEBI" id="CHEBI:57865"/>
    </ligand>
</feature>
<feature type="binding site" evidence="1">
    <location>
        <position position="55"/>
    </location>
    <ligand>
        <name>ATP</name>
        <dbReference type="ChEBI" id="CHEBI:30616"/>
    </ligand>
</feature>
<feature type="binding site" evidence="1">
    <location>
        <position position="59"/>
    </location>
    <ligand>
        <name>ATP</name>
        <dbReference type="ChEBI" id="CHEBI:30616"/>
    </ligand>
</feature>
<feature type="binding site" evidence="1">
    <location>
        <position position="74"/>
    </location>
    <ligand>
        <name>UMP</name>
        <dbReference type="ChEBI" id="CHEBI:57865"/>
    </ligand>
</feature>
<feature type="binding site" evidence="1">
    <location>
        <begin position="135"/>
        <end position="142"/>
    </location>
    <ligand>
        <name>UMP</name>
        <dbReference type="ChEBI" id="CHEBI:57865"/>
    </ligand>
</feature>
<feature type="binding site" evidence="1">
    <location>
        <position position="162"/>
    </location>
    <ligand>
        <name>ATP</name>
        <dbReference type="ChEBI" id="CHEBI:30616"/>
    </ligand>
</feature>
<feature type="binding site" evidence="1">
    <location>
        <position position="168"/>
    </location>
    <ligand>
        <name>ATP</name>
        <dbReference type="ChEBI" id="CHEBI:30616"/>
    </ligand>
</feature>
<feature type="binding site" evidence="1">
    <location>
        <position position="171"/>
    </location>
    <ligand>
        <name>ATP</name>
        <dbReference type="ChEBI" id="CHEBI:30616"/>
    </ligand>
</feature>
<sequence length="238" mass="25571">MSSRSYKRVLLKLSGEALMGDDAFGINRSTIVRMTDEIAEVAAMGVELAIVIGGGNIFRGVAPGAQGMDRATADYMGMMATIMNALALQDALKHKGLDTRVQSALNIDQVVEPYIRPKTLRYLEEGKVVIFAAGTGNPFFTTDTAAALRGAEIGAEIVLKATKVDGIYSADPNKDPTATRYARISFDEAIVRRLEVMDATAFALCRDQKLPIKVFSINKSGALKRVVGGEDEGTLVHV</sequence>
<dbReference type="EC" id="2.7.4.22" evidence="1"/>
<dbReference type="EMBL" id="AM167904">
    <property type="protein sequence ID" value="CAJ49344.1"/>
    <property type="status" value="ALT_INIT"/>
    <property type="molecule type" value="Genomic_DNA"/>
</dbReference>
<dbReference type="RefSeq" id="WP_039051757.1">
    <property type="nucleotide sequence ID" value="NC_010645.1"/>
</dbReference>
<dbReference type="SMR" id="Q2L160"/>
<dbReference type="STRING" id="360910.BAV1736"/>
<dbReference type="GeneID" id="92935203"/>
<dbReference type="KEGG" id="bav:BAV1736"/>
<dbReference type="eggNOG" id="COG0528">
    <property type="taxonomic scope" value="Bacteria"/>
</dbReference>
<dbReference type="HOGENOM" id="CLU_033861_0_0_4"/>
<dbReference type="OrthoDB" id="9807458at2"/>
<dbReference type="UniPathway" id="UPA00159">
    <property type="reaction ID" value="UER00275"/>
</dbReference>
<dbReference type="Proteomes" id="UP000001977">
    <property type="component" value="Chromosome"/>
</dbReference>
<dbReference type="GO" id="GO:0005829">
    <property type="term" value="C:cytosol"/>
    <property type="evidence" value="ECO:0007669"/>
    <property type="project" value="TreeGrafter"/>
</dbReference>
<dbReference type="GO" id="GO:0005524">
    <property type="term" value="F:ATP binding"/>
    <property type="evidence" value="ECO:0007669"/>
    <property type="project" value="UniProtKB-KW"/>
</dbReference>
<dbReference type="GO" id="GO:0033862">
    <property type="term" value="F:UMP kinase activity"/>
    <property type="evidence" value="ECO:0007669"/>
    <property type="project" value="UniProtKB-EC"/>
</dbReference>
<dbReference type="GO" id="GO:0044210">
    <property type="term" value="P:'de novo' CTP biosynthetic process"/>
    <property type="evidence" value="ECO:0007669"/>
    <property type="project" value="UniProtKB-UniRule"/>
</dbReference>
<dbReference type="GO" id="GO:0006225">
    <property type="term" value="P:UDP biosynthetic process"/>
    <property type="evidence" value="ECO:0007669"/>
    <property type="project" value="TreeGrafter"/>
</dbReference>
<dbReference type="CDD" id="cd04254">
    <property type="entry name" value="AAK_UMPK-PyrH-Ec"/>
    <property type="match status" value="1"/>
</dbReference>
<dbReference type="FunFam" id="3.40.1160.10:FF:000001">
    <property type="entry name" value="Uridylate kinase"/>
    <property type="match status" value="1"/>
</dbReference>
<dbReference type="Gene3D" id="3.40.1160.10">
    <property type="entry name" value="Acetylglutamate kinase-like"/>
    <property type="match status" value="1"/>
</dbReference>
<dbReference type="HAMAP" id="MF_01220_B">
    <property type="entry name" value="PyrH_B"/>
    <property type="match status" value="1"/>
</dbReference>
<dbReference type="InterPro" id="IPR036393">
    <property type="entry name" value="AceGlu_kinase-like_sf"/>
</dbReference>
<dbReference type="InterPro" id="IPR001048">
    <property type="entry name" value="Asp/Glu/Uridylate_kinase"/>
</dbReference>
<dbReference type="InterPro" id="IPR011817">
    <property type="entry name" value="Uridylate_kinase"/>
</dbReference>
<dbReference type="InterPro" id="IPR015963">
    <property type="entry name" value="Uridylate_kinase_bac"/>
</dbReference>
<dbReference type="NCBIfam" id="TIGR02075">
    <property type="entry name" value="pyrH_bact"/>
    <property type="match status" value="1"/>
</dbReference>
<dbReference type="PANTHER" id="PTHR42833">
    <property type="entry name" value="URIDYLATE KINASE"/>
    <property type="match status" value="1"/>
</dbReference>
<dbReference type="PANTHER" id="PTHR42833:SF4">
    <property type="entry name" value="URIDYLATE KINASE PUMPKIN, CHLOROPLASTIC"/>
    <property type="match status" value="1"/>
</dbReference>
<dbReference type="Pfam" id="PF00696">
    <property type="entry name" value="AA_kinase"/>
    <property type="match status" value="1"/>
</dbReference>
<dbReference type="PIRSF" id="PIRSF005650">
    <property type="entry name" value="Uridylate_kin"/>
    <property type="match status" value="1"/>
</dbReference>
<dbReference type="SUPFAM" id="SSF53633">
    <property type="entry name" value="Carbamate kinase-like"/>
    <property type="match status" value="1"/>
</dbReference>
<comment type="function">
    <text evidence="1">Catalyzes the reversible phosphorylation of UMP to UDP.</text>
</comment>
<comment type="catalytic activity">
    <reaction evidence="1">
        <text>UMP + ATP = UDP + ADP</text>
        <dbReference type="Rhea" id="RHEA:24400"/>
        <dbReference type="ChEBI" id="CHEBI:30616"/>
        <dbReference type="ChEBI" id="CHEBI:57865"/>
        <dbReference type="ChEBI" id="CHEBI:58223"/>
        <dbReference type="ChEBI" id="CHEBI:456216"/>
        <dbReference type="EC" id="2.7.4.22"/>
    </reaction>
</comment>
<comment type="activity regulation">
    <text evidence="1">Inhibited by UTP.</text>
</comment>
<comment type="pathway">
    <text evidence="1">Pyrimidine metabolism; CTP biosynthesis via de novo pathway; UDP from UMP (UMPK route): step 1/1.</text>
</comment>
<comment type="subunit">
    <text evidence="1">Homohexamer.</text>
</comment>
<comment type="subcellular location">
    <subcellularLocation>
        <location evidence="1">Cytoplasm</location>
    </subcellularLocation>
</comment>
<comment type="similarity">
    <text evidence="1">Belongs to the UMP kinase family.</text>
</comment>
<comment type="sequence caution" evidence="2">
    <conflict type="erroneous initiation">
        <sequence resource="EMBL-CDS" id="CAJ49344"/>
    </conflict>
</comment>
<organism>
    <name type="scientific">Bordetella avium (strain 197N)</name>
    <dbReference type="NCBI Taxonomy" id="360910"/>
    <lineage>
        <taxon>Bacteria</taxon>
        <taxon>Pseudomonadati</taxon>
        <taxon>Pseudomonadota</taxon>
        <taxon>Betaproteobacteria</taxon>
        <taxon>Burkholderiales</taxon>
        <taxon>Alcaligenaceae</taxon>
        <taxon>Bordetella</taxon>
    </lineage>
</organism>
<reference key="1">
    <citation type="journal article" date="2006" name="J. Bacteriol.">
        <title>Comparison of the genome sequence of the poultry pathogen Bordetella avium with those of B. bronchiseptica, B. pertussis, and B. parapertussis reveals extensive diversity in surface structures associated with host interaction.</title>
        <authorList>
            <person name="Sebaihia M."/>
            <person name="Preston A."/>
            <person name="Maskell D.J."/>
            <person name="Kuzmiak H."/>
            <person name="Connell T.D."/>
            <person name="King N.D."/>
            <person name="Orndorff P.E."/>
            <person name="Miyamoto D.M."/>
            <person name="Thomson N.R."/>
            <person name="Harris D."/>
            <person name="Goble A."/>
            <person name="Lord A."/>
            <person name="Murphy L."/>
            <person name="Quail M.A."/>
            <person name="Rutter S."/>
            <person name="Squares R."/>
            <person name="Squares S."/>
            <person name="Woodward J."/>
            <person name="Parkhill J."/>
            <person name="Temple L.M."/>
        </authorList>
    </citation>
    <scope>NUCLEOTIDE SEQUENCE [LARGE SCALE GENOMIC DNA]</scope>
    <source>
        <strain>197N</strain>
    </source>
</reference>
<gene>
    <name evidence="1" type="primary">pyrH</name>
    <name type="synonym">smbA</name>
    <name type="ordered locus">BAV1736</name>
</gene>
<proteinExistence type="inferred from homology"/>
<name>PYRH_BORA1</name>